<comment type="function">
    <text evidence="1">DNA ligase that catalyzes the formation of phosphodiester linkages between 5'-phosphoryl and 3'-hydroxyl groups in double-stranded DNA using NAD as a coenzyme and as the energy source for the reaction. It is essential for DNA replication and repair of damaged DNA.</text>
</comment>
<comment type="catalytic activity">
    <reaction evidence="1">
        <text>NAD(+) + (deoxyribonucleotide)n-3'-hydroxyl + 5'-phospho-(deoxyribonucleotide)m = (deoxyribonucleotide)n+m + AMP + beta-nicotinamide D-nucleotide.</text>
        <dbReference type="EC" id="6.5.1.2"/>
    </reaction>
</comment>
<comment type="cofactor">
    <cofactor evidence="1">
        <name>Mg(2+)</name>
        <dbReference type="ChEBI" id="CHEBI:18420"/>
    </cofactor>
    <cofactor evidence="1">
        <name>Mn(2+)</name>
        <dbReference type="ChEBI" id="CHEBI:29035"/>
    </cofactor>
</comment>
<comment type="similarity">
    <text evidence="1">Belongs to the NAD-dependent DNA ligase family. LigA subfamily.</text>
</comment>
<feature type="chain" id="PRO_0000161747" description="DNA ligase">
    <location>
        <begin position="1"/>
        <end position="656"/>
    </location>
</feature>
<feature type="domain" description="BRCT" evidence="1">
    <location>
        <begin position="577"/>
        <end position="656"/>
    </location>
</feature>
<feature type="active site" description="N6-AMP-lysine intermediate" evidence="1">
    <location>
        <position position="112"/>
    </location>
</feature>
<feature type="binding site" evidence="1">
    <location>
        <begin position="32"/>
        <end position="36"/>
    </location>
    <ligand>
        <name>NAD(+)</name>
        <dbReference type="ChEBI" id="CHEBI:57540"/>
    </ligand>
</feature>
<feature type="binding site" evidence="1">
    <location>
        <begin position="81"/>
        <end position="82"/>
    </location>
    <ligand>
        <name>NAD(+)</name>
        <dbReference type="ChEBI" id="CHEBI:57540"/>
    </ligand>
</feature>
<feature type="binding site" evidence="1">
    <location>
        <position position="133"/>
    </location>
    <ligand>
        <name>NAD(+)</name>
        <dbReference type="ChEBI" id="CHEBI:57540"/>
    </ligand>
</feature>
<feature type="binding site" evidence="1">
    <location>
        <position position="167"/>
    </location>
    <ligand>
        <name>NAD(+)</name>
        <dbReference type="ChEBI" id="CHEBI:57540"/>
    </ligand>
</feature>
<feature type="binding site" evidence="1">
    <location>
        <position position="306"/>
    </location>
    <ligand>
        <name>NAD(+)</name>
        <dbReference type="ChEBI" id="CHEBI:57540"/>
    </ligand>
</feature>
<feature type="binding site" evidence="1">
    <location>
        <position position="400"/>
    </location>
    <ligand>
        <name>Zn(2+)</name>
        <dbReference type="ChEBI" id="CHEBI:29105"/>
    </ligand>
</feature>
<feature type="binding site" evidence="1">
    <location>
        <position position="403"/>
    </location>
    <ligand>
        <name>Zn(2+)</name>
        <dbReference type="ChEBI" id="CHEBI:29105"/>
    </ligand>
</feature>
<feature type="binding site" evidence="1">
    <location>
        <position position="416"/>
    </location>
    <ligand>
        <name>Zn(2+)</name>
        <dbReference type="ChEBI" id="CHEBI:29105"/>
    </ligand>
</feature>
<feature type="binding site" evidence="1">
    <location>
        <position position="421"/>
    </location>
    <ligand>
        <name>Zn(2+)</name>
        <dbReference type="ChEBI" id="CHEBI:29105"/>
    </ligand>
</feature>
<sequence length="656" mass="73900">MIKSQKEYLERIAYLNTLSHHYYNLDEPIVSDAIYDELYQELKAYEEKNPNGIQANSPTQKVGATTTNSFNKNPHLMRMWSLDDVFNQSELQAWLQRILKAYPSASFVCSPKLDGVSLNLLYQHGKLVKATTRGNGLEGELVSANAKHIANIPHAIAYNGEIEIRGEVIISKKDFDALNQERLNANEPLFANPRNAASGSLRQLDSEITKKRKLQFIPWGVGKHSLNFLSFKECLDFIVSLGFSAIQYLSLNKNHQEIEDNYHTLIREREGFFALLDGMVIVVNELNIQKELGYTQKSPKFACAYKFPALEKHTKIVGVINQVGRSGAITPVALLEPVEIAGAMINRATLHNYSEIEKKNIMLSDRVVVIRSGDVIPKIIKPLESYRDGSQHKIERPKVCPICSHELLCEEIFTYCQNLNCPARLKESLIHFASKDALNIQGLGDKVIEQLFEEKLIFNALDLYALKLEDLMRLDKFKIKKAQNLLDAILKSKNPPLWRLINALGIEHIGKGASKTLAKYGLNVLEKSEAEFLEMEGFGVEMARSLVNFYASNQEFIRSLFELLNPKNSDMAEEKQKSSSVFNNKTIVLTGTLSKPRQEYAQMLENLGAKISSSVSAKTDFLIAGENPGSKLALAQKHGVSVLNEEELLKRLKELD</sequence>
<reference key="1">
    <citation type="journal article" date="1997" name="Nature">
        <title>The complete genome sequence of the gastric pathogen Helicobacter pylori.</title>
        <authorList>
            <person name="Tomb J.-F."/>
            <person name="White O."/>
            <person name="Kerlavage A.R."/>
            <person name="Clayton R.A."/>
            <person name="Sutton G.G."/>
            <person name="Fleischmann R.D."/>
            <person name="Ketchum K.A."/>
            <person name="Klenk H.-P."/>
            <person name="Gill S.R."/>
            <person name="Dougherty B.A."/>
            <person name="Nelson K.E."/>
            <person name="Quackenbush J."/>
            <person name="Zhou L."/>
            <person name="Kirkness E.F."/>
            <person name="Peterson S.N."/>
            <person name="Loftus B.J."/>
            <person name="Richardson D.L."/>
            <person name="Dodson R.J."/>
            <person name="Khalak H.G."/>
            <person name="Glodek A."/>
            <person name="McKenney K."/>
            <person name="FitzGerald L.M."/>
            <person name="Lee N."/>
            <person name="Adams M.D."/>
            <person name="Hickey E.K."/>
            <person name="Berg D.E."/>
            <person name="Gocayne J.D."/>
            <person name="Utterback T.R."/>
            <person name="Peterson J.D."/>
            <person name="Kelley J.M."/>
            <person name="Cotton M.D."/>
            <person name="Weidman J.F."/>
            <person name="Fujii C."/>
            <person name="Bowman C."/>
            <person name="Watthey L."/>
            <person name="Wallin E."/>
            <person name="Hayes W.S."/>
            <person name="Borodovsky M."/>
            <person name="Karp P.D."/>
            <person name="Smith H.O."/>
            <person name="Fraser C.M."/>
            <person name="Venter J.C."/>
        </authorList>
    </citation>
    <scope>NUCLEOTIDE SEQUENCE [LARGE SCALE GENOMIC DNA]</scope>
    <source>
        <strain>ATCC 700392 / 26695</strain>
    </source>
</reference>
<keyword id="KW-0002">3D-structure</keyword>
<keyword id="KW-0227">DNA damage</keyword>
<keyword id="KW-0234">DNA repair</keyword>
<keyword id="KW-0235">DNA replication</keyword>
<keyword id="KW-0436">Ligase</keyword>
<keyword id="KW-0460">Magnesium</keyword>
<keyword id="KW-0464">Manganese</keyword>
<keyword id="KW-0479">Metal-binding</keyword>
<keyword id="KW-0520">NAD</keyword>
<keyword id="KW-1185">Reference proteome</keyword>
<keyword id="KW-0862">Zinc</keyword>
<organism>
    <name type="scientific">Helicobacter pylori (strain ATCC 700392 / 26695)</name>
    <name type="common">Campylobacter pylori</name>
    <dbReference type="NCBI Taxonomy" id="85962"/>
    <lineage>
        <taxon>Bacteria</taxon>
        <taxon>Pseudomonadati</taxon>
        <taxon>Campylobacterota</taxon>
        <taxon>Epsilonproteobacteria</taxon>
        <taxon>Campylobacterales</taxon>
        <taxon>Helicobacteraceae</taxon>
        <taxon>Helicobacter</taxon>
    </lineage>
</organism>
<protein>
    <recommendedName>
        <fullName evidence="1">DNA ligase</fullName>
        <ecNumber evidence="1">6.5.1.2</ecNumber>
    </recommendedName>
    <alternativeName>
        <fullName evidence="1">Polydeoxyribonucleotide synthase [NAD(+)]</fullName>
    </alternativeName>
</protein>
<accession>O25336</accession>
<name>DNLJ_HELPY</name>
<gene>
    <name evidence="1" type="primary">ligA</name>
    <name type="synonym">lig</name>
    <name type="ordered locus">HP_0615</name>
</gene>
<evidence type="ECO:0000255" key="1">
    <source>
        <dbReference type="HAMAP-Rule" id="MF_01588"/>
    </source>
</evidence>
<proteinExistence type="evidence at protein level"/>
<dbReference type="EC" id="6.5.1.2" evidence="1"/>
<dbReference type="EMBL" id="AE000511">
    <property type="protein sequence ID" value="AAD07680.1"/>
    <property type="molecule type" value="Genomic_DNA"/>
</dbReference>
<dbReference type="PIR" id="G64596">
    <property type="entry name" value="G64596"/>
</dbReference>
<dbReference type="RefSeq" id="NP_207410.1">
    <property type="nucleotide sequence ID" value="NC_000915.1"/>
</dbReference>
<dbReference type="RefSeq" id="WP_000597558.1">
    <property type="nucleotide sequence ID" value="NC_018939.1"/>
</dbReference>
<dbReference type="PDB" id="5FRQ">
    <property type="method" value="X-ray"/>
    <property type="resolution" value="2.90 A"/>
    <property type="chains" value="G/L=554-561"/>
</dbReference>
<dbReference type="PDBsum" id="5FRQ"/>
<dbReference type="SMR" id="O25336"/>
<dbReference type="DIP" id="DIP-3062N"/>
<dbReference type="FunCoup" id="O25336">
    <property type="interactions" value="307"/>
</dbReference>
<dbReference type="IntAct" id="O25336">
    <property type="interactions" value="5"/>
</dbReference>
<dbReference type="MINT" id="O25336"/>
<dbReference type="STRING" id="85962.HP_0615"/>
<dbReference type="PaxDb" id="85962-C694_03180"/>
<dbReference type="EnsemblBacteria" id="AAD07680">
    <property type="protein sequence ID" value="AAD07680"/>
    <property type="gene ID" value="HP_0615"/>
</dbReference>
<dbReference type="KEGG" id="heo:C694_03180"/>
<dbReference type="KEGG" id="hpy:HP_0615"/>
<dbReference type="PATRIC" id="fig|85962.47.peg.663"/>
<dbReference type="eggNOG" id="COG0272">
    <property type="taxonomic scope" value="Bacteria"/>
</dbReference>
<dbReference type="InParanoid" id="O25336"/>
<dbReference type="OrthoDB" id="9759736at2"/>
<dbReference type="PhylomeDB" id="O25336"/>
<dbReference type="Proteomes" id="UP000000429">
    <property type="component" value="Chromosome"/>
</dbReference>
<dbReference type="GO" id="GO:0005829">
    <property type="term" value="C:cytosol"/>
    <property type="evidence" value="ECO:0000318"/>
    <property type="project" value="GO_Central"/>
</dbReference>
<dbReference type="GO" id="GO:0003677">
    <property type="term" value="F:DNA binding"/>
    <property type="evidence" value="ECO:0007669"/>
    <property type="project" value="InterPro"/>
</dbReference>
<dbReference type="GO" id="GO:0003911">
    <property type="term" value="F:DNA ligase (NAD+) activity"/>
    <property type="evidence" value="ECO:0000318"/>
    <property type="project" value="GO_Central"/>
</dbReference>
<dbReference type="GO" id="GO:0046872">
    <property type="term" value="F:metal ion binding"/>
    <property type="evidence" value="ECO:0007669"/>
    <property type="project" value="UniProtKB-KW"/>
</dbReference>
<dbReference type="GO" id="GO:0006281">
    <property type="term" value="P:DNA repair"/>
    <property type="evidence" value="ECO:0007669"/>
    <property type="project" value="UniProtKB-KW"/>
</dbReference>
<dbReference type="GO" id="GO:0006260">
    <property type="term" value="P:DNA replication"/>
    <property type="evidence" value="ECO:0007669"/>
    <property type="project" value="UniProtKB-KW"/>
</dbReference>
<dbReference type="CDD" id="cd17748">
    <property type="entry name" value="BRCT_DNA_ligase_like"/>
    <property type="match status" value="1"/>
</dbReference>
<dbReference type="CDD" id="cd00114">
    <property type="entry name" value="LIGANc"/>
    <property type="match status" value="1"/>
</dbReference>
<dbReference type="FunFam" id="1.10.150.20:FF:000007">
    <property type="entry name" value="DNA ligase"/>
    <property type="match status" value="1"/>
</dbReference>
<dbReference type="FunFam" id="2.40.50.140:FF:000012">
    <property type="entry name" value="DNA ligase"/>
    <property type="match status" value="1"/>
</dbReference>
<dbReference type="FunFam" id="3.30.470.30:FF:000034">
    <property type="entry name" value="DNA ligase"/>
    <property type="match status" value="1"/>
</dbReference>
<dbReference type="FunFam" id="3.40.50.10190:FF:000069">
    <property type="entry name" value="DNA ligase"/>
    <property type="match status" value="1"/>
</dbReference>
<dbReference type="Gene3D" id="1.10.150.20">
    <property type="entry name" value="5' to 3' exonuclease, C-terminal subdomain"/>
    <property type="match status" value="2"/>
</dbReference>
<dbReference type="Gene3D" id="3.40.50.10190">
    <property type="entry name" value="BRCT domain"/>
    <property type="match status" value="1"/>
</dbReference>
<dbReference type="Gene3D" id="3.30.470.30">
    <property type="entry name" value="DNA ligase/mRNA capping enzyme"/>
    <property type="match status" value="1"/>
</dbReference>
<dbReference type="Gene3D" id="1.10.287.610">
    <property type="entry name" value="Helix hairpin bin"/>
    <property type="match status" value="1"/>
</dbReference>
<dbReference type="Gene3D" id="2.40.50.140">
    <property type="entry name" value="Nucleic acid-binding proteins"/>
    <property type="match status" value="1"/>
</dbReference>
<dbReference type="HAMAP" id="MF_01588">
    <property type="entry name" value="DNA_ligase_A"/>
    <property type="match status" value="1"/>
</dbReference>
<dbReference type="InterPro" id="IPR001357">
    <property type="entry name" value="BRCT_dom"/>
</dbReference>
<dbReference type="InterPro" id="IPR036420">
    <property type="entry name" value="BRCT_dom_sf"/>
</dbReference>
<dbReference type="InterPro" id="IPR001679">
    <property type="entry name" value="DNA_ligase"/>
</dbReference>
<dbReference type="InterPro" id="IPR018239">
    <property type="entry name" value="DNA_ligase_AS"/>
</dbReference>
<dbReference type="InterPro" id="IPR033136">
    <property type="entry name" value="DNA_ligase_CS"/>
</dbReference>
<dbReference type="InterPro" id="IPR013839">
    <property type="entry name" value="DNAligase_adenylation"/>
</dbReference>
<dbReference type="InterPro" id="IPR013840">
    <property type="entry name" value="DNAligase_N"/>
</dbReference>
<dbReference type="InterPro" id="IPR003583">
    <property type="entry name" value="Hlx-hairpin-Hlx_DNA-bd_motif"/>
</dbReference>
<dbReference type="InterPro" id="IPR012340">
    <property type="entry name" value="NA-bd_OB-fold"/>
</dbReference>
<dbReference type="InterPro" id="IPR004150">
    <property type="entry name" value="NAD_DNA_ligase_OB"/>
</dbReference>
<dbReference type="InterPro" id="IPR010994">
    <property type="entry name" value="RuvA_2-like"/>
</dbReference>
<dbReference type="NCBIfam" id="TIGR00575">
    <property type="entry name" value="dnlj"/>
    <property type="match status" value="1"/>
</dbReference>
<dbReference type="NCBIfam" id="NF005932">
    <property type="entry name" value="PRK07956.1"/>
    <property type="match status" value="1"/>
</dbReference>
<dbReference type="PANTHER" id="PTHR23389">
    <property type="entry name" value="CHROMOSOME TRANSMISSION FIDELITY FACTOR 18"/>
    <property type="match status" value="1"/>
</dbReference>
<dbReference type="PANTHER" id="PTHR23389:SF9">
    <property type="entry name" value="DNA LIGASE"/>
    <property type="match status" value="1"/>
</dbReference>
<dbReference type="Pfam" id="PF00533">
    <property type="entry name" value="BRCT"/>
    <property type="match status" value="1"/>
</dbReference>
<dbReference type="Pfam" id="PF01653">
    <property type="entry name" value="DNA_ligase_aden"/>
    <property type="match status" value="1"/>
</dbReference>
<dbReference type="Pfam" id="PF03120">
    <property type="entry name" value="DNA_ligase_OB"/>
    <property type="match status" value="1"/>
</dbReference>
<dbReference type="PIRSF" id="PIRSF001604">
    <property type="entry name" value="LigA"/>
    <property type="match status" value="1"/>
</dbReference>
<dbReference type="SMART" id="SM00292">
    <property type="entry name" value="BRCT"/>
    <property type="match status" value="1"/>
</dbReference>
<dbReference type="SMART" id="SM00278">
    <property type="entry name" value="HhH1"/>
    <property type="match status" value="3"/>
</dbReference>
<dbReference type="SMART" id="SM00532">
    <property type="entry name" value="LIGANc"/>
    <property type="match status" value="1"/>
</dbReference>
<dbReference type="SUPFAM" id="SSF52113">
    <property type="entry name" value="BRCT domain"/>
    <property type="match status" value="1"/>
</dbReference>
<dbReference type="SUPFAM" id="SSF56091">
    <property type="entry name" value="DNA ligase/mRNA capping enzyme, catalytic domain"/>
    <property type="match status" value="1"/>
</dbReference>
<dbReference type="SUPFAM" id="SSF50249">
    <property type="entry name" value="Nucleic acid-binding proteins"/>
    <property type="match status" value="1"/>
</dbReference>
<dbReference type="SUPFAM" id="SSF47781">
    <property type="entry name" value="RuvA domain 2-like"/>
    <property type="match status" value="1"/>
</dbReference>
<dbReference type="PROSITE" id="PS50172">
    <property type="entry name" value="BRCT"/>
    <property type="match status" value="1"/>
</dbReference>
<dbReference type="PROSITE" id="PS01055">
    <property type="entry name" value="DNA_LIGASE_N1"/>
    <property type="match status" value="1"/>
</dbReference>
<dbReference type="PROSITE" id="PS01056">
    <property type="entry name" value="DNA_LIGASE_N2"/>
    <property type="match status" value="1"/>
</dbReference>